<evidence type="ECO:0000255" key="1">
    <source>
        <dbReference type="HAMAP-Rule" id="MF_01277"/>
    </source>
</evidence>
<organism>
    <name type="scientific">Vibrio atlanticus (strain LGP32)</name>
    <name type="common">Vibrio splendidus (strain Mel32)</name>
    <dbReference type="NCBI Taxonomy" id="575788"/>
    <lineage>
        <taxon>Bacteria</taxon>
        <taxon>Pseudomonadati</taxon>
        <taxon>Pseudomonadota</taxon>
        <taxon>Gammaproteobacteria</taxon>
        <taxon>Vibrionales</taxon>
        <taxon>Vibrionaceae</taxon>
        <taxon>Vibrio</taxon>
    </lineage>
</organism>
<gene>
    <name evidence="1" type="primary">purR</name>
    <name type="ordered locus">VS_1088</name>
</gene>
<accession>B7VMG4</accession>
<proteinExistence type="inferred from homology"/>
<dbReference type="EMBL" id="FM954972">
    <property type="protein sequence ID" value="CAV18202.1"/>
    <property type="molecule type" value="Genomic_DNA"/>
</dbReference>
<dbReference type="SMR" id="B7VMG4"/>
<dbReference type="STRING" id="575788.VS_1088"/>
<dbReference type="KEGG" id="vsp:VS_1088"/>
<dbReference type="PATRIC" id="fig|575788.5.peg.2412"/>
<dbReference type="eggNOG" id="COG1609">
    <property type="taxonomic scope" value="Bacteria"/>
</dbReference>
<dbReference type="HOGENOM" id="CLU_037628_6_2_6"/>
<dbReference type="UniPathway" id="UPA00488"/>
<dbReference type="Proteomes" id="UP000009100">
    <property type="component" value="Chromosome 1"/>
</dbReference>
<dbReference type="GO" id="GO:0003700">
    <property type="term" value="F:DNA-binding transcription factor activity"/>
    <property type="evidence" value="ECO:0007669"/>
    <property type="project" value="TreeGrafter"/>
</dbReference>
<dbReference type="GO" id="GO:0000976">
    <property type="term" value="F:transcription cis-regulatory region binding"/>
    <property type="evidence" value="ECO:0007669"/>
    <property type="project" value="TreeGrafter"/>
</dbReference>
<dbReference type="GO" id="GO:0045892">
    <property type="term" value="P:negative regulation of DNA-templated transcription"/>
    <property type="evidence" value="ECO:0007669"/>
    <property type="project" value="UniProtKB-UniRule"/>
</dbReference>
<dbReference type="GO" id="GO:0006164">
    <property type="term" value="P:purine nucleotide biosynthetic process"/>
    <property type="evidence" value="ECO:0007669"/>
    <property type="project" value="UniProtKB-UniPathway"/>
</dbReference>
<dbReference type="CDD" id="cd01392">
    <property type="entry name" value="HTH_LacI"/>
    <property type="match status" value="1"/>
</dbReference>
<dbReference type="CDD" id="cd06275">
    <property type="entry name" value="PBP1_PurR"/>
    <property type="match status" value="1"/>
</dbReference>
<dbReference type="FunFam" id="1.10.260.40:FF:000002">
    <property type="entry name" value="HTH-type transcriptional repressor PurR"/>
    <property type="match status" value="1"/>
</dbReference>
<dbReference type="Gene3D" id="3.40.50.2300">
    <property type="match status" value="2"/>
</dbReference>
<dbReference type="Gene3D" id="1.10.260.40">
    <property type="entry name" value="lambda repressor-like DNA-binding domains"/>
    <property type="match status" value="1"/>
</dbReference>
<dbReference type="HAMAP" id="MF_01277">
    <property type="entry name" value="HTH_type_PurR"/>
    <property type="match status" value="1"/>
</dbReference>
<dbReference type="InterPro" id="IPR000843">
    <property type="entry name" value="HTH_LacI"/>
</dbReference>
<dbReference type="InterPro" id="IPR046335">
    <property type="entry name" value="LacI/GalR-like_sensor"/>
</dbReference>
<dbReference type="InterPro" id="IPR010982">
    <property type="entry name" value="Lambda_DNA-bd_dom_sf"/>
</dbReference>
<dbReference type="InterPro" id="IPR028082">
    <property type="entry name" value="Peripla_BP_I"/>
</dbReference>
<dbReference type="InterPro" id="IPR023588">
    <property type="entry name" value="Tscrpt_reg_HTH_PurR"/>
</dbReference>
<dbReference type="PANTHER" id="PTHR30146:SF148">
    <property type="entry name" value="HTH-TYPE TRANSCRIPTIONAL REPRESSOR PURR-RELATED"/>
    <property type="match status" value="1"/>
</dbReference>
<dbReference type="PANTHER" id="PTHR30146">
    <property type="entry name" value="LACI-RELATED TRANSCRIPTIONAL REPRESSOR"/>
    <property type="match status" value="1"/>
</dbReference>
<dbReference type="Pfam" id="PF00356">
    <property type="entry name" value="LacI"/>
    <property type="match status" value="1"/>
</dbReference>
<dbReference type="Pfam" id="PF13377">
    <property type="entry name" value="Peripla_BP_3"/>
    <property type="match status" value="1"/>
</dbReference>
<dbReference type="PRINTS" id="PR00036">
    <property type="entry name" value="HTHLACI"/>
</dbReference>
<dbReference type="SMART" id="SM00354">
    <property type="entry name" value="HTH_LACI"/>
    <property type="match status" value="1"/>
</dbReference>
<dbReference type="SUPFAM" id="SSF47413">
    <property type="entry name" value="lambda repressor-like DNA-binding domains"/>
    <property type="match status" value="1"/>
</dbReference>
<dbReference type="SUPFAM" id="SSF53822">
    <property type="entry name" value="Periplasmic binding protein-like I"/>
    <property type="match status" value="1"/>
</dbReference>
<dbReference type="PROSITE" id="PS00356">
    <property type="entry name" value="HTH_LACI_1"/>
    <property type="match status" value="1"/>
</dbReference>
<dbReference type="PROSITE" id="PS50932">
    <property type="entry name" value="HTH_LACI_2"/>
    <property type="match status" value="1"/>
</dbReference>
<reference key="1">
    <citation type="submission" date="2009-02" db="EMBL/GenBank/DDBJ databases">
        <title>Vibrio splendidus str. LGP32 complete genome.</title>
        <authorList>
            <person name="Mazel D."/>
            <person name="Le Roux F."/>
        </authorList>
    </citation>
    <scope>NUCLEOTIDE SEQUENCE [LARGE SCALE GENOMIC DNA]</scope>
    <source>
        <strain>LGP32</strain>
    </source>
</reference>
<protein>
    <recommendedName>
        <fullName evidence="1">HTH-type transcriptional repressor PurR</fullName>
    </recommendedName>
    <alternativeName>
        <fullName evidence="1">Pur regulon repressor</fullName>
    </alternativeName>
    <alternativeName>
        <fullName evidence="1">Purine nucleotide synthesis repressor</fullName>
    </alternativeName>
</protein>
<name>PURR_VIBA3</name>
<feature type="chain" id="PRO_1000165219" description="HTH-type transcriptional repressor PurR">
    <location>
        <begin position="1"/>
        <end position="334"/>
    </location>
</feature>
<feature type="domain" description="HTH lacI-type" evidence="1">
    <location>
        <begin position="2"/>
        <end position="56"/>
    </location>
</feature>
<feature type="DNA-binding region" description="H-T-H motif" evidence="1">
    <location>
        <begin position="4"/>
        <end position="23"/>
    </location>
</feature>
<feature type="DNA-binding region" evidence="1">
    <location>
        <begin position="48"/>
        <end position="56"/>
    </location>
</feature>
<feature type="binding site" evidence="1">
    <location>
        <position position="73"/>
    </location>
    <ligand>
        <name>hypoxanthine</name>
        <dbReference type="ChEBI" id="CHEBI:17368"/>
    </ligand>
</feature>
<feature type="binding site" evidence="1">
    <location>
        <position position="189"/>
    </location>
    <ligand>
        <name>hypoxanthine</name>
        <dbReference type="ChEBI" id="CHEBI:17368"/>
    </ligand>
</feature>
<feature type="binding site" evidence="1">
    <location>
        <position position="220"/>
    </location>
    <ligand>
        <name>hypoxanthine</name>
        <dbReference type="ChEBI" id="CHEBI:17368"/>
    </ligand>
</feature>
<feature type="binding site" evidence="1">
    <location>
        <position position="274"/>
    </location>
    <ligand>
        <name>hypoxanthine</name>
        <dbReference type="ChEBI" id="CHEBI:17368"/>
    </ligand>
</feature>
<keyword id="KW-0238">DNA-binding</keyword>
<keyword id="KW-0658">Purine biosynthesis</keyword>
<keyword id="KW-0678">Repressor</keyword>
<keyword id="KW-0804">Transcription</keyword>
<keyword id="KW-0805">Transcription regulation</keyword>
<comment type="function">
    <text evidence="1">Is the main repressor of the genes involved in the de novo synthesis of purine nucleotides, regulating purB, purC, purEK, purF, purHD, purL, purMN and guaBA expression. PurR is allosterically activated to bind its cognate DNA by binding the purine corepressors, hypoxanthine or guanine, thereby effecting transcription repression.</text>
</comment>
<comment type="pathway">
    <text>Purine metabolism; purine nucleotide biosynthesis [regulation].</text>
</comment>
<comment type="subunit">
    <text evidence="1">Homodimer.</text>
</comment>
<comment type="domain">
    <text evidence="1">Consists of two structural and functional domains: an N-terminal DNA-binding domain, approximately the first 60 residues, and a larger C-terminal domain, approximately 280 residues, which imparts the function of corepressor binding and oligomerization.</text>
</comment>
<sequence length="334" mass="37612">MATIKDVARLAGVSTTTVSHVINKTRFVAEATQEKVNKAVDELNYAPSAVARSLKCNTTRTIGMLVTQSTNLFFSEVIDGVESYCYRQGYTLILCNTGGIYEKQRDYIRMLAEKRVDGILVMCSDLTEELREMLDRHADIPKVIMDWGPESSQADKIIDNSEEGGYLATKYLIERGHSKIACLSGHLDKAACVERISGYKRALNEAKITADENMIIEGNFECDTAVIAADQIIEMEERPTAVFCFNDTMALGLMSRLQEKGIRIPEDISVIGYDNIELAEYFSPPLTTVHQPKRRVGKNAFEILLERIKDKDHEKRVFEMHPEIVERSTVKTLN</sequence>